<organism>
    <name type="scientific">Bacillus cereus (strain ATCC 10987 / NRS 248)</name>
    <dbReference type="NCBI Taxonomy" id="222523"/>
    <lineage>
        <taxon>Bacteria</taxon>
        <taxon>Bacillati</taxon>
        <taxon>Bacillota</taxon>
        <taxon>Bacilli</taxon>
        <taxon>Bacillales</taxon>
        <taxon>Bacillaceae</taxon>
        <taxon>Bacillus</taxon>
        <taxon>Bacillus cereus group</taxon>
    </lineage>
</organism>
<name>RECA_BACC1</name>
<keyword id="KW-0067">ATP-binding</keyword>
<keyword id="KW-0963">Cytoplasm</keyword>
<keyword id="KW-0227">DNA damage</keyword>
<keyword id="KW-0233">DNA recombination</keyword>
<keyword id="KW-0234">DNA repair</keyword>
<keyword id="KW-0238">DNA-binding</keyword>
<keyword id="KW-0547">Nucleotide-binding</keyword>
<keyword id="KW-0742">SOS response</keyword>
<sequence>MSDRQAALDMALKQIEKQFGKGSIMKLGEQAERKVSTVSSGSLALDVALGVGGYPRGRIIEIYGPESSGKTTVSLHAIAEVQRQGGQAAFIDAEHAMDPVYAQKLGVNIDELLLSQPDTGEQGLEIAEALVRSGAVDIIVIDSVAALVPKAEIEGDMGDSHVGLQARLMSQALRKLSGAINKSKTIAIFINQIREKVGVMFGNPETTPGGRALKFYSTVRLEVRRAEQLKQGNDIVGNKTKVKVVKNKVAPPFRVAEVDIMYGEGISREGEILDMASELDIVQKSGAWYSYNEERLGQGRENSKQFLKENTDLREEIAFFIREHHGISEDSGAEDMEDPSLLD</sequence>
<comment type="function">
    <text evidence="1">Can catalyze the hydrolysis of ATP in the presence of single-stranded DNA, the ATP-dependent uptake of single-stranded DNA by duplex DNA, and the ATP-dependent hybridization of homologous single-stranded DNAs. It interacts with LexA causing its activation and leading to its autocatalytic cleavage.</text>
</comment>
<comment type="subcellular location">
    <subcellularLocation>
        <location evidence="1">Cytoplasm</location>
    </subcellularLocation>
</comment>
<comment type="similarity">
    <text evidence="1">Belongs to the RecA family.</text>
</comment>
<protein>
    <recommendedName>
        <fullName evidence="1">Protein RecA</fullName>
    </recommendedName>
    <alternativeName>
        <fullName evidence="1">Recombinase A</fullName>
    </alternativeName>
</protein>
<reference key="1">
    <citation type="journal article" date="2004" name="Nucleic Acids Res.">
        <title>The genome sequence of Bacillus cereus ATCC 10987 reveals metabolic adaptations and a large plasmid related to Bacillus anthracis pXO1.</title>
        <authorList>
            <person name="Rasko D.A."/>
            <person name="Ravel J."/>
            <person name="Oekstad O.A."/>
            <person name="Helgason E."/>
            <person name="Cer R.Z."/>
            <person name="Jiang L."/>
            <person name="Shores K.A."/>
            <person name="Fouts D.E."/>
            <person name="Tourasse N.J."/>
            <person name="Angiuoli S.V."/>
            <person name="Kolonay J.F."/>
            <person name="Nelson W.C."/>
            <person name="Kolstoe A.-B."/>
            <person name="Fraser C.M."/>
            <person name="Read T.D."/>
        </authorList>
    </citation>
    <scope>NUCLEOTIDE SEQUENCE [LARGE SCALE GENOMIC DNA]</scope>
    <source>
        <strain>ATCC 10987 / NRS 248</strain>
    </source>
</reference>
<proteinExistence type="inferred from homology"/>
<gene>
    <name evidence="1" type="primary">recA</name>
    <name type="ordered locus">BCE_3814</name>
</gene>
<feature type="chain" id="PRO_0000122649" description="Protein RecA">
    <location>
        <begin position="1"/>
        <end position="343"/>
    </location>
</feature>
<feature type="binding site" evidence="1">
    <location>
        <begin position="64"/>
        <end position="71"/>
    </location>
    <ligand>
        <name>ATP</name>
        <dbReference type="ChEBI" id="CHEBI:30616"/>
    </ligand>
</feature>
<evidence type="ECO:0000255" key="1">
    <source>
        <dbReference type="HAMAP-Rule" id="MF_00268"/>
    </source>
</evidence>
<dbReference type="EMBL" id="AE017194">
    <property type="protein sequence ID" value="AAS42719.1"/>
    <property type="molecule type" value="Genomic_DNA"/>
</dbReference>
<dbReference type="SMR" id="P62210"/>
<dbReference type="KEGG" id="bca:BCE_3814"/>
<dbReference type="HOGENOM" id="CLU_040469_7_1_9"/>
<dbReference type="Proteomes" id="UP000002527">
    <property type="component" value="Chromosome"/>
</dbReference>
<dbReference type="GO" id="GO:0005829">
    <property type="term" value="C:cytosol"/>
    <property type="evidence" value="ECO:0007669"/>
    <property type="project" value="TreeGrafter"/>
</dbReference>
<dbReference type="GO" id="GO:0005524">
    <property type="term" value="F:ATP binding"/>
    <property type="evidence" value="ECO:0007669"/>
    <property type="project" value="UniProtKB-UniRule"/>
</dbReference>
<dbReference type="GO" id="GO:0016887">
    <property type="term" value="F:ATP hydrolysis activity"/>
    <property type="evidence" value="ECO:0007669"/>
    <property type="project" value="InterPro"/>
</dbReference>
<dbReference type="GO" id="GO:0140664">
    <property type="term" value="F:ATP-dependent DNA damage sensor activity"/>
    <property type="evidence" value="ECO:0007669"/>
    <property type="project" value="InterPro"/>
</dbReference>
<dbReference type="GO" id="GO:0003684">
    <property type="term" value="F:damaged DNA binding"/>
    <property type="evidence" value="ECO:0007669"/>
    <property type="project" value="UniProtKB-UniRule"/>
</dbReference>
<dbReference type="GO" id="GO:0003697">
    <property type="term" value="F:single-stranded DNA binding"/>
    <property type="evidence" value="ECO:0007669"/>
    <property type="project" value="UniProtKB-UniRule"/>
</dbReference>
<dbReference type="GO" id="GO:0006310">
    <property type="term" value="P:DNA recombination"/>
    <property type="evidence" value="ECO:0007669"/>
    <property type="project" value="UniProtKB-UniRule"/>
</dbReference>
<dbReference type="GO" id="GO:0006281">
    <property type="term" value="P:DNA repair"/>
    <property type="evidence" value="ECO:0007669"/>
    <property type="project" value="UniProtKB-UniRule"/>
</dbReference>
<dbReference type="GO" id="GO:0009432">
    <property type="term" value="P:SOS response"/>
    <property type="evidence" value="ECO:0007669"/>
    <property type="project" value="UniProtKB-UniRule"/>
</dbReference>
<dbReference type="CDD" id="cd00983">
    <property type="entry name" value="RecA"/>
    <property type="match status" value="1"/>
</dbReference>
<dbReference type="FunFam" id="3.40.50.300:FF:000087">
    <property type="entry name" value="Recombinase RecA"/>
    <property type="match status" value="1"/>
</dbReference>
<dbReference type="Gene3D" id="3.40.50.300">
    <property type="entry name" value="P-loop containing nucleotide triphosphate hydrolases"/>
    <property type="match status" value="1"/>
</dbReference>
<dbReference type="HAMAP" id="MF_00268">
    <property type="entry name" value="RecA"/>
    <property type="match status" value="1"/>
</dbReference>
<dbReference type="InterPro" id="IPR003593">
    <property type="entry name" value="AAA+_ATPase"/>
</dbReference>
<dbReference type="InterPro" id="IPR013765">
    <property type="entry name" value="DNA_recomb/repair_RecA"/>
</dbReference>
<dbReference type="InterPro" id="IPR020584">
    <property type="entry name" value="DNA_recomb/repair_RecA_CS"/>
</dbReference>
<dbReference type="InterPro" id="IPR027417">
    <property type="entry name" value="P-loop_NTPase"/>
</dbReference>
<dbReference type="InterPro" id="IPR049261">
    <property type="entry name" value="RecA-like_C"/>
</dbReference>
<dbReference type="InterPro" id="IPR049428">
    <property type="entry name" value="RecA-like_N"/>
</dbReference>
<dbReference type="InterPro" id="IPR020588">
    <property type="entry name" value="RecA_ATP-bd"/>
</dbReference>
<dbReference type="InterPro" id="IPR023400">
    <property type="entry name" value="RecA_C_sf"/>
</dbReference>
<dbReference type="InterPro" id="IPR020587">
    <property type="entry name" value="RecA_monomer-monomer_interface"/>
</dbReference>
<dbReference type="NCBIfam" id="TIGR02012">
    <property type="entry name" value="tigrfam_recA"/>
    <property type="match status" value="1"/>
</dbReference>
<dbReference type="PANTHER" id="PTHR45900:SF1">
    <property type="entry name" value="MITOCHONDRIAL DNA REPAIR PROTEIN RECA HOMOLOG-RELATED"/>
    <property type="match status" value="1"/>
</dbReference>
<dbReference type="PANTHER" id="PTHR45900">
    <property type="entry name" value="RECA"/>
    <property type="match status" value="1"/>
</dbReference>
<dbReference type="Pfam" id="PF00154">
    <property type="entry name" value="RecA"/>
    <property type="match status" value="1"/>
</dbReference>
<dbReference type="Pfam" id="PF21096">
    <property type="entry name" value="RecA_C"/>
    <property type="match status" value="1"/>
</dbReference>
<dbReference type="PRINTS" id="PR00142">
    <property type="entry name" value="RECA"/>
</dbReference>
<dbReference type="SMART" id="SM00382">
    <property type="entry name" value="AAA"/>
    <property type="match status" value="1"/>
</dbReference>
<dbReference type="SUPFAM" id="SSF52540">
    <property type="entry name" value="P-loop containing nucleoside triphosphate hydrolases"/>
    <property type="match status" value="1"/>
</dbReference>
<dbReference type="SUPFAM" id="SSF54752">
    <property type="entry name" value="RecA protein, C-terminal domain"/>
    <property type="match status" value="1"/>
</dbReference>
<dbReference type="PROSITE" id="PS00321">
    <property type="entry name" value="RECA_1"/>
    <property type="match status" value="1"/>
</dbReference>
<dbReference type="PROSITE" id="PS50162">
    <property type="entry name" value="RECA_2"/>
    <property type="match status" value="1"/>
</dbReference>
<dbReference type="PROSITE" id="PS50163">
    <property type="entry name" value="RECA_3"/>
    <property type="match status" value="1"/>
</dbReference>
<accession>P62210</accession>